<accession>A6Q1Z8</accession>
<feature type="chain" id="PRO_1000007947" description="S-adenosylmethionine synthase">
    <location>
        <begin position="1"/>
        <end position="386"/>
    </location>
</feature>
<feature type="region of interest" description="Flexible loop" evidence="1">
    <location>
        <begin position="100"/>
        <end position="110"/>
    </location>
</feature>
<feature type="binding site" description="in other chain" evidence="1">
    <location>
        <position position="16"/>
    </location>
    <ligand>
        <name>ATP</name>
        <dbReference type="ChEBI" id="CHEBI:30616"/>
        <note>ligand shared between two neighboring subunits</note>
    </ligand>
</feature>
<feature type="binding site" evidence="1">
    <location>
        <position position="18"/>
    </location>
    <ligand>
        <name>Mg(2+)</name>
        <dbReference type="ChEBI" id="CHEBI:18420"/>
    </ligand>
</feature>
<feature type="binding site" evidence="1">
    <location>
        <position position="44"/>
    </location>
    <ligand>
        <name>K(+)</name>
        <dbReference type="ChEBI" id="CHEBI:29103"/>
    </ligand>
</feature>
<feature type="binding site" description="in other chain" evidence="1">
    <location>
        <position position="57"/>
    </location>
    <ligand>
        <name>L-methionine</name>
        <dbReference type="ChEBI" id="CHEBI:57844"/>
        <note>ligand shared between two neighboring subunits</note>
    </ligand>
</feature>
<feature type="binding site" description="in other chain" evidence="1">
    <location>
        <position position="100"/>
    </location>
    <ligand>
        <name>L-methionine</name>
        <dbReference type="ChEBI" id="CHEBI:57844"/>
        <note>ligand shared between two neighboring subunits</note>
    </ligand>
</feature>
<feature type="binding site" description="in other chain" evidence="1">
    <location>
        <begin position="164"/>
        <end position="166"/>
    </location>
    <ligand>
        <name>ATP</name>
        <dbReference type="ChEBI" id="CHEBI:30616"/>
        <note>ligand shared between two neighboring subunits</note>
    </ligand>
</feature>
<feature type="binding site" description="in other chain" evidence="1">
    <location>
        <begin position="230"/>
        <end position="231"/>
    </location>
    <ligand>
        <name>ATP</name>
        <dbReference type="ChEBI" id="CHEBI:30616"/>
        <note>ligand shared between two neighboring subunits</note>
    </ligand>
</feature>
<feature type="binding site" evidence="1">
    <location>
        <position position="239"/>
    </location>
    <ligand>
        <name>ATP</name>
        <dbReference type="ChEBI" id="CHEBI:30616"/>
        <note>ligand shared between two neighboring subunits</note>
    </ligand>
</feature>
<feature type="binding site" evidence="1">
    <location>
        <position position="239"/>
    </location>
    <ligand>
        <name>L-methionine</name>
        <dbReference type="ChEBI" id="CHEBI:57844"/>
        <note>ligand shared between two neighboring subunits</note>
    </ligand>
</feature>
<feature type="binding site" description="in other chain" evidence="1">
    <location>
        <begin position="245"/>
        <end position="246"/>
    </location>
    <ligand>
        <name>ATP</name>
        <dbReference type="ChEBI" id="CHEBI:30616"/>
        <note>ligand shared between two neighboring subunits</note>
    </ligand>
</feature>
<feature type="binding site" evidence="1">
    <location>
        <position position="262"/>
    </location>
    <ligand>
        <name>ATP</name>
        <dbReference type="ChEBI" id="CHEBI:30616"/>
        <note>ligand shared between two neighboring subunits</note>
    </ligand>
</feature>
<feature type="binding site" evidence="1">
    <location>
        <position position="266"/>
    </location>
    <ligand>
        <name>ATP</name>
        <dbReference type="ChEBI" id="CHEBI:30616"/>
        <note>ligand shared between two neighboring subunits</note>
    </ligand>
</feature>
<feature type="binding site" description="in other chain" evidence="1">
    <location>
        <position position="270"/>
    </location>
    <ligand>
        <name>L-methionine</name>
        <dbReference type="ChEBI" id="CHEBI:57844"/>
        <note>ligand shared between two neighboring subunits</note>
    </ligand>
</feature>
<proteinExistence type="inferred from homology"/>
<organism>
    <name type="scientific">Nitratiruptor sp. (strain SB155-2)</name>
    <dbReference type="NCBI Taxonomy" id="387092"/>
    <lineage>
        <taxon>Bacteria</taxon>
        <taxon>Pseudomonadati</taxon>
        <taxon>Campylobacterota</taxon>
        <taxon>Epsilonproteobacteria</taxon>
        <taxon>Nautiliales</taxon>
        <taxon>Nitratiruptoraceae</taxon>
        <taxon>Nitratiruptor</taxon>
    </lineage>
</organism>
<keyword id="KW-0067">ATP-binding</keyword>
<keyword id="KW-0963">Cytoplasm</keyword>
<keyword id="KW-0460">Magnesium</keyword>
<keyword id="KW-0479">Metal-binding</keyword>
<keyword id="KW-0547">Nucleotide-binding</keyword>
<keyword id="KW-0554">One-carbon metabolism</keyword>
<keyword id="KW-0630">Potassium</keyword>
<keyword id="KW-1185">Reference proteome</keyword>
<keyword id="KW-0808">Transferase</keyword>
<comment type="function">
    <text evidence="1">Catalyzes the formation of S-adenosylmethionine (AdoMet) from methionine and ATP. The overall synthetic reaction is composed of two sequential steps, AdoMet formation and the subsequent tripolyphosphate hydrolysis which occurs prior to release of AdoMet from the enzyme.</text>
</comment>
<comment type="catalytic activity">
    <reaction evidence="1">
        <text>L-methionine + ATP + H2O = S-adenosyl-L-methionine + phosphate + diphosphate</text>
        <dbReference type="Rhea" id="RHEA:21080"/>
        <dbReference type="ChEBI" id="CHEBI:15377"/>
        <dbReference type="ChEBI" id="CHEBI:30616"/>
        <dbReference type="ChEBI" id="CHEBI:33019"/>
        <dbReference type="ChEBI" id="CHEBI:43474"/>
        <dbReference type="ChEBI" id="CHEBI:57844"/>
        <dbReference type="ChEBI" id="CHEBI:59789"/>
        <dbReference type="EC" id="2.5.1.6"/>
    </reaction>
</comment>
<comment type="cofactor">
    <cofactor evidence="1">
        <name>Mg(2+)</name>
        <dbReference type="ChEBI" id="CHEBI:18420"/>
    </cofactor>
    <text evidence="1">Binds 2 divalent ions per subunit.</text>
</comment>
<comment type="cofactor">
    <cofactor evidence="1">
        <name>K(+)</name>
        <dbReference type="ChEBI" id="CHEBI:29103"/>
    </cofactor>
    <text evidence="1">Binds 1 potassium ion per subunit.</text>
</comment>
<comment type="pathway">
    <text evidence="1">Amino-acid biosynthesis; S-adenosyl-L-methionine biosynthesis; S-adenosyl-L-methionine from L-methionine: step 1/1.</text>
</comment>
<comment type="subunit">
    <text evidence="1">Homotetramer; dimer of dimers.</text>
</comment>
<comment type="subcellular location">
    <subcellularLocation>
        <location evidence="1">Cytoplasm</location>
    </subcellularLocation>
</comment>
<comment type="similarity">
    <text evidence="1">Belongs to the AdoMet synthase family.</text>
</comment>
<reference key="1">
    <citation type="journal article" date="2007" name="Proc. Natl. Acad. Sci. U.S.A.">
        <title>Deep-sea vent epsilon-proteobacterial genomes provide insights into emergence of pathogens.</title>
        <authorList>
            <person name="Nakagawa S."/>
            <person name="Takaki Y."/>
            <person name="Shimamura S."/>
            <person name="Reysenbach A.-L."/>
            <person name="Takai K."/>
            <person name="Horikoshi K."/>
        </authorList>
    </citation>
    <scope>NUCLEOTIDE SEQUENCE [LARGE SCALE GENOMIC DNA]</scope>
    <source>
        <strain>SB155-2</strain>
    </source>
</reference>
<name>METK_NITSB</name>
<dbReference type="EC" id="2.5.1.6" evidence="1"/>
<dbReference type="EMBL" id="AP009178">
    <property type="protein sequence ID" value="BAF69507.1"/>
    <property type="molecule type" value="Genomic_DNA"/>
</dbReference>
<dbReference type="RefSeq" id="WP_012081770.1">
    <property type="nucleotide sequence ID" value="NC_009662.1"/>
</dbReference>
<dbReference type="SMR" id="A6Q1Z8"/>
<dbReference type="FunCoup" id="A6Q1Z8">
    <property type="interactions" value="467"/>
</dbReference>
<dbReference type="STRING" id="387092.NIS_0393"/>
<dbReference type="KEGG" id="nis:NIS_0393"/>
<dbReference type="eggNOG" id="COG0192">
    <property type="taxonomic scope" value="Bacteria"/>
</dbReference>
<dbReference type="HOGENOM" id="CLU_041802_1_1_7"/>
<dbReference type="InParanoid" id="A6Q1Z8"/>
<dbReference type="OrthoDB" id="9801686at2"/>
<dbReference type="UniPathway" id="UPA00315">
    <property type="reaction ID" value="UER00080"/>
</dbReference>
<dbReference type="Proteomes" id="UP000001118">
    <property type="component" value="Chromosome"/>
</dbReference>
<dbReference type="GO" id="GO:0005737">
    <property type="term" value="C:cytoplasm"/>
    <property type="evidence" value="ECO:0007669"/>
    <property type="project" value="UniProtKB-SubCell"/>
</dbReference>
<dbReference type="GO" id="GO:0005524">
    <property type="term" value="F:ATP binding"/>
    <property type="evidence" value="ECO:0007669"/>
    <property type="project" value="UniProtKB-UniRule"/>
</dbReference>
<dbReference type="GO" id="GO:0000287">
    <property type="term" value="F:magnesium ion binding"/>
    <property type="evidence" value="ECO:0007669"/>
    <property type="project" value="UniProtKB-UniRule"/>
</dbReference>
<dbReference type="GO" id="GO:0004478">
    <property type="term" value="F:methionine adenosyltransferase activity"/>
    <property type="evidence" value="ECO:0007669"/>
    <property type="project" value="UniProtKB-UniRule"/>
</dbReference>
<dbReference type="GO" id="GO:0006730">
    <property type="term" value="P:one-carbon metabolic process"/>
    <property type="evidence" value="ECO:0007669"/>
    <property type="project" value="UniProtKB-KW"/>
</dbReference>
<dbReference type="GO" id="GO:0006556">
    <property type="term" value="P:S-adenosylmethionine biosynthetic process"/>
    <property type="evidence" value="ECO:0007669"/>
    <property type="project" value="UniProtKB-UniRule"/>
</dbReference>
<dbReference type="CDD" id="cd18079">
    <property type="entry name" value="S-AdoMet_synt"/>
    <property type="match status" value="1"/>
</dbReference>
<dbReference type="FunFam" id="3.30.300.10:FF:000003">
    <property type="entry name" value="S-adenosylmethionine synthase"/>
    <property type="match status" value="1"/>
</dbReference>
<dbReference type="Gene3D" id="3.30.300.10">
    <property type="match status" value="3"/>
</dbReference>
<dbReference type="HAMAP" id="MF_00086">
    <property type="entry name" value="S_AdoMet_synth1"/>
    <property type="match status" value="1"/>
</dbReference>
<dbReference type="InterPro" id="IPR022631">
    <property type="entry name" value="ADOMET_SYNTHASE_CS"/>
</dbReference>
<dbReference type="InterPro" id="IPR022630">
    <property type="entry name" value="S-AdoMet_synt_C"/>
</dbReference>
<dbReference type="InterPro" id="IPR022629">
    <property type="entry name" value="S-AdoMet_synt_central"/>
</dbReference>
<dbReference type="InterPro" id="IPR022628">
    <property type="entry name" value="S-AdoMet_synt_N"/>
</dbReference>
<dbReference type="InterPro" id="IPR002133">
    <property type="entry name" value="S-AdoMet_synthetase"/>
</dbReference>
<dbReference type="InterPro" id="IPR022636">
    <property type="entry name" value="S-AdoMet_synthetase_sfam"/>
</dbReference>
<dbReference type="NCBIfam" id="TIGR01034">
    <property type="entry name" value="metK"/>
    <property type="match status" value="1"/>
</dbReference>
<dbReference type="PANTHER" id="PTHR11964">
    <property type="entry name" value="S-ADENOSYLMETHIONINE SYNTHETASE"/>
    <property type="match status" value="1"/>
</dbReference>
<dbReference type="Pfam" id="PF02773">
    <property type="entry name" value="S-AdoMet_synt_C"/>
    <property type="match status" value="1"/>
</dbReference>
<dbReference type="Pfam" id="PF02772">
    <property type="entry name" value="S-AdoMet_synt_M"/>
    <property type="match status" value="1"/>
</dbReference>
<dbReference type="Pfam" id="PF00438">
    <property type="entry name" value="S-AdoMet_synt_N"/>
    <property type="match status" value="1"/>
</dbReference>
<dbReference type="PIRSF" id="PIRSF000497">
    <property type="entry name" value="MAT"/>
    <property type="match status" value="1"/>
</dbReference>
<dbReference type="SUPFAM" id="SSF55973">
    <property type="entry name" value="S-adenosylmethionine synthetase"/>
    <property type="match status" value="3"/>
</dbReference>
<dbReference type="PROSITE" id="PS00376">
    <property type="entry name" value="ADOMET_SYNTHASE_1"/>
    <property type="match status" value="1"/>
</dbReference>
<dbReference type="PROSITE" id="PS00377">
    <property type="entry name" value="ADOMET_SYNTHASE_2"/>
    <property type="match status" value="1"/>
</dbReference>
<protein>
    <recommendedName>
        <fullName evidence="1">S-adenosylmethionine synthase</fullName>
        <shortName evidence="1">AdoMet synthase</shortName>
        <ecNumber evidence="1">2.5.1.6</ecNumber>
    </recommendedName>
    <alternativeName>
        <fullName evidence="1">MAT</fullName>
    </alternativeName>
    <alternativeName>
        <fullName evidence="1">Methionine adenosyltransferase</fullName>
    </alternativeName>
</protein>
<evidence type="ECO:0000255" key="1">
    <source>
        <dbReference type="HAMAP-Rule" id="MF_00086"/>
    </source>
</evidence>
<gene>
    <name evidence="1" type="primary">metK</name>
    <name type="ordered locus">NIS_0393</name>
</gene>
<sequence length="386" mass="42119">MAREFLFTSESVTEGHPDKMADQISDAILDYIIERDPNARVACETLLSNGFAIIAGELKTTTYAPMQDIVREVIREIGYTDALYGFDYRSAGVLNGVGEQSPDINQGVDQAGGEIGAGDQGLMFGYACKETDVLMPLPITMAHRLTQELANARKEGVLPFLRPDGKAQVTVQYVDGKPKKIKTIVISTQHDPDVSYNRLKDAVIEEIVYKVIPKELIADDIVYHINPTGRFVIGGPQGDAGLTGRKIIVDTYGGSCPHGGGAFSGKDPTKVDRSGAYAARYVAKNLVASGACEKATVQIAYAIGVVEPVSIMVDSHGTAKVPDEKLEACVRDLFDLTPRGIIKTLDLLRPIYRKTAAYGHFGRELPEFTWEKTDKADEISDYLKIR</sequence>